<gene>
    <name evidence="1" type="primary">rpoC</name>
    <name type="ordered locus">azo3423</name>
</gene>
<organism>
    <name type="scientific">Azoarcus sp. (strain BH72)</name>
    <dbReference type="NCBI Taxonomy" id="418699"/>
    <lineage>
        <taxon>Bacteria</taxon>
        <taxon>Pseudomonadati</taxon>
        <taxon>Pseudomonadota</taxon>
        <taxon>Betaproteobacteria</taxon>
        <taxon>Rhodocyclales</taxon>
        <taxon>Zoogloeaceae</taxon>
        <taxon>Azoarcus</taxon>
    </lineage>
</organism>
<comment type="function">
    <text evidence="1">DNA-dependent RNA polymerase catalyzes the transcription of DNA into RNA using the four ribonucleoside triphosphates as substrates.</text>
</comment>
<comment type="catalytic activity">
    <reaction evidence="1">
        <text>RNA(n) + a ribonucleoside 5'-triphosphate = RNA(n+1) + diphosphate</text>
        <dbReference type="Rhea" id="RHEA:21248"/>
        <dbReference type="Rhea" id="RHEA-COMP:14527"/>
        <dbReference type="Rhea" id="RHEA-COMP:17342"/>
        <dbReference type="ChEBI" id="CHEBI:33019"/>
        <dbReference type="ChEBI" id="CHEBI:61557"/>
        <dbReference type="ChEBI" id="CHEBI:140395"/>
        <dbReference type="EC" id="2.7.7.6"/>
    </reaction>
</comment>
<comment type="cofactor">
    <cofactor evidence="1">
        <name>Mg(2+)</name>
        <dbReference type="ChEBI" id="CHEBI:18420"/>
    </cofactor>
    <text evidence="1">Binds 1 Mg(2+) ion per subunit.</text>
</comment>
<comment type="cofactor">
    <cofactor evidence="1">
        <name>Zn(2+)</name>
        <dbReference type="ChEBI" id="CHEBI:29105"/>
    </cofactor>
    <text evidence="1">Binds 2 Zn(2+) ions per subunit.</text>
</comment>
<comment type="subunit">
    <text evidence="1">The RNAP catalytic core consists of 2 alpha, 1 beta, 1 beta' and 1 omega subunit. When a sigma factor is associated with the core the holoenzyme is formed, which can initiate transcription.</text>
</comment>
<comment type="similarity">
    <text evidence="1">Belongs to the RNA polymerase beta' chain family.</text>
</comment>
<protein>
    <recommendedName>
        <fullName evidence="1">DNA-directed RNA polymerase subunit beta'</fullName>
        <shortName evidence="1">RNAP subunit beta'</shortName>
        <ecNumber evidence="1">2.7.7.6</ecNumber>
    </recommendedName>
    <alternativeName>
        <fullName evidence="1">RNA polymerase subunit beta'</fullName>
    </alternativeName>
    <alternativeName>
        <fullName evidence="1">Transcriptase subunit beta'</fullName>
    </alternativeName>
</protein>
<dbReference type="EC" id="2.7.7.6" evidence="1"/>
<dbReference type="EMBL" id="AM406670">
    <property type="protein sequence ID" value="CAL96039.1"/>
    <property type="molecule type" value="Genomic_DNA"/>
</dbReference>
<dbReference type="RefSeq" id="WP_011767146.1">
    <property type="nucleotide sequence ID" value="NC_008702.1"/>
</dbReference>
<dbReference type="SMR" id="A1KB33"/>
<dbReference type="STRING" id="62928.azo3423"/>
<dbReference type="KEGG" id="aoa:dqs_3562"/>
<dbReference type="KEGG" id="azo:azo3423"/>
<dbReference type="eggNOG" id="COG0086">
    <property type="taxonomic scope" value="Bacteria"/>
</dbReference>
<dbReference type="HOGENOM" id="CLU_000524_3_1_4"/>
<dbReference type="OrthoDB" id="9815296at2"/>
<dbReference type="Proteomes" id="UP000002588">
    <property type="component" value="Chromosome"/>
</dbReference>
<dbReference type="GO" id="GO:0000428">
    <property type="term" value="C:DNA-directed RNA polymerase complex"/>
    <property type="evidence" value="ECO:0007669"/>
    <property type="project" value="UniProtKB-KW"/>
</dbReference>
<dbReference type="GO" id="GO:0003677">
    <property type="term" value="F:DNA binding"/>
    <property type="evidence" value="ECO:0007669"/>
    <property type="project" value="UniProtKB-UniRule"/>
</dbReference>
<dbReference type="GO" id="GO:0003899">
    <property type="term" value="F:DNA-directed RNA polymerase activity"/>
    <property type="evidence" value="ECO:0007669"/>
    <property type="project" value="UniProtKB-UniRule"/>
</dbReference>
<dbReference type="GO" id="GO:0000287">
    <property type="term" value="F:magnesium ion binding"/>
    <property type="evidence" value="ECO:0007669"/>
    <property type="project" value="UniProtKB-UniRule"/>
</dbReference>
<dbReference type="GO" id="GO:0008270">
    <property type="term" value="F:zinc ion binding"/>
    <property type="evidence" value="ECO:0007669"/>
    <property type="project" value="UniProtKB-UniRule"/>
</dbReference>
<dbReference type="GO" id="GO:0006351">
    <property type="term" value="P:DNA-templated transcription"/>
    <property type="evidence" value="ECO:0007669"/>
    <property type="project" value="UniProtKB-UniRule"/>
</dbReference>
<dbReference type="CDD" id="cd02655">
    <property type="entry name" value="RNAP_beta'_C"/>
    <property type="match status" value="1"/>
</dbReference>
<dbReference type="CDD" id="cd01609">
    <property type="entry name" value="RNAP_beta'_N"/>
    <property type="match status" value="1"/>
</dbReference>
<dbReference type="FunFam" id="1.10.132.30:FF:000003">
    <property type="entry name" value="DNA-directed RNA polymerase subunit beta"/>
    <property type="match status" value="1"/>
</dbReference>
<dbReference type="FunFam" id="1.10.150.390:FF:000002">
    <property type="entry name" value="DNA-directed RNA polymerase subunit beta"/>
    <property type="match status" value="1"/>
</dbReference>
<dbReference type="FunFam" id="1.10.40.90:FF:000001">
    <property type="entry name" value="DNA-directed RNA polymerase subunit beta"/>
    <property type="match status" value="1"/>
</dbReference>
<dbReference type="FunFam" id="4.10.860.120:FF:000001">
    <property type="entry name" value="DNA-directed RNA polymerase subunit beta"/>
    <property type="match status" value="1"/>
</dbReference>
<dbReference type="Gene3D" id="1.10.132.30">
    <property type="match status" value="1"/>
</dbReference>
<dbReference type="Gene3D" id="1.10.150.390">
    <property type="match status" value="1"/>
</dbReference>
<dbReference type="Gene3D" id="1.10.1790.20">
    <property type="match status" value="1"/>
</dbReference>
<dbReference type="Gene3D" id="1.10.40.90">
    <property type="match status" value="1"/>
</dbReference>
<dbReference type="Gene3D" id="2.40.40.20">
    <property type="match status" value="1"/>
</dbReference>
<dbReference type="Gene3D" id="2.40.50.100">
    <property type="match status" value="3"/>
</dbReference>
<dbReference type="Gene3D" id="4.10.860.120">
    <property type="entry name" value="RNA polymerase II, clamp domain"/>
    <property type="match status" value="1"/>
</dbReference>
<dbReference type="Gene3D" id="1.10.274.100">
    <property type="entry name" value="RNA polymerase Rpb1, domain 3"/>
    <property type="match status" value="2"/>
</dbReference>
<dbReference type="HAMAP" id="MF_01322">
    <property type="entry name" value="RNApol_bact_RpoC"/>
    <property type="match status" value="1"/>
</dbReference>
<dbReference type="InterPro" id="IPR045867">
    <property type="entry name" value="DNA-dir_RpoC_beta_prime"/>
</dbReference>
<dbReference type="InterPro" id="IPR012754">
    <property type="entry name" value="DNA-dir_RpoC_beta_prime_bact"/>
</dbReference>
<dbReference type="InterPro" id="IPR000722">
    <property type="entry name" value="RNA_pol_asu"/>
</dbReference>
<dbReference type="InterPro" id="IPR006592">
    <property type="entry name" value="RNA_pol_N"/>
</dbReference>
<dbReference type="InterPro" id="IPR007080">
    <property type="entry name" value="RNA_pol_Rpb1_1"/>
</dbReference>
<dbReference type="InterPro" id="IPR007066">
    <property type="entry name" value="RNA_pol_Rpb1_3"/>
</dbReference>
<dbReference type="InterPro" id="IPR042102">
    <property type="entry name" value="RNA_pol_Rpb1_3_sf"/>
</dbReference>
<dbReference type="InterPro" id="IPR007083">
    <property type="entry name" value="RNA_pol_Rpb1_4"/>
</dbReference>
<dbReference type="InterPro" id="IPR007081">
    <property type="entry name" value="RNA_pol_Rpb1_5"/>
</dbReference>
<dbReference type="InterPro" id="IPR044893">
    <property type="entry name" value="RNA_pol_Rpb1_clamp_domain"/>
</dbReference>
<dbReference type="InterPro" id="IPR038120">
    <property type="entry name" value="Rpb1_funnel_sf"/>
</dbReference>
<dbReference type="NCBIfam" id="TIGR02386">
    <property type="entry name" value="rpoC_TIGR"/>
    <property type="match status" value="1"/>
</dbReference>
<dbReference type="PANTHER" id="PTHR19376">
    <property type="entry name" value="DNA-DIRECTED RNA POLYMERASE"/>
    <property type="match status" value="1"/>
</dbReference>
<dbReference type="PANTHER" id="PTHR19376:SF54">
    <property type="entry name" value="DNA-DIRECTED RNA POLYMERASE SUBUNIT BETA"/>
    <property type="match status" value="1"/>
</dbReference>
<dbReference type="Pfam" id="PF04997">
    <property type="entry name" value="RNA_pol_Rpb1_1"/>
    <property type="match status" value="1"/>
</dbReference>
<dbReference type="Pfam" id="PF00623">
    <property type="entry name" value="RNA_pol_Rpb1_2"/>
    <property type="match status" value="1"/>
</dbReference>
<dbReference type="Pfam" id="PF04983">
    <property type="entry name" value="RNA_pol_Rpb1_3"/>
    <property type="match status" value="1"/>
</dbReference>
<dbReference type="Pfam" id="PF05000">
    <property type="entry name" value="RNA_pol_Rpb1_4"/>
    <property type="match status" value="1"/>
</dbReference>
<dbReference type="Pfam" id="PF04998">
    <property type="entry name" value="RNA_pol_Rpb1_5"/>
    <property type="match status" value="1"/>
</dbReference>
<dbReference type="SMART" id="SM00663">
    <property type="entry name" value="RPOLA_N"/>
    <property type="match status" value="1"/>
</dbReference>
<dbReference type="SUPFAM" id="SSF64484">
    <property type="entry name" value="beta and beta-prime subunits of DNA dependent RNA-polymerase"/>
    <property type="match status" value="1"/>
</dbReference>
<reference key="1">
    <citation type="journal article" date="2006" name="Nat. Biotechnol.">
        <title>Complete genome of the mutualistic, N2-fixing grass endophyte Azoarcus sp. strain BH72.</title>
        <authorList>
            <person name="Krause A."/>
            <person name="Ramakumar A."/>
            <person name="Bartels D."/>
            <person name="Battistoni F."/>
            <person name="Bekel T."/>
            <person name="Boch J."/>
            <person name="Boehm M."/>
            <person name="Friedrich F."/>
            <person name="Hurek T."/>
            <person name="Krause L."/>
            <person name="Linke B."/>
            <person name="McHardy A.C."/>
            <person name="Sarkar A."/>
            <person name="Schneiker S."/>
            <person name="Syed A.A."/>
            <person name="Thauer R."/>
            <person name="Vorhoelter F.-J."/>
            <person name="Weidner S."/>
            <person name="Puehler A."/>
            <person name="Reinhold-Hurek B."/>
            <person name="Kaiser O."/>
            <person name="Goesmann A."/>
        </authorList>
    </citation>
    <scope>NUCLEOTIDE SEQUENCE [LARGE SCALE GENOMIC DNA]</scope>
    <source>
        <strain>BH72</strain>
    </source>
</reference>
<feature type="chain" id="PRO_0000353290" description="DNA-directed RNA polymerase subunit beta'">
    <location>
        <begin position="1"/>
        <end position="1404"/>
    </location>
</feature>
<feature type="binding site" evidence="1">
    <location>
        <position position="72"/>
    </location>
    <ligand>
        <name>Zn(2+)</name>
        <dbReference type="ChEBI" id="CHEBI:29105"/>
        <label>1</label>
    </ligand>
</feature>
<feature type="binding site" evidence="1">
    <location>
        <position position="74"/>
    </location>
    <ligand>
        <name>Zn(2+)</name>
        <dbReference type="ChEBI" id="CHEBI:29105"/>
        <label>1</label>
    </ligand>
</feature>
<feature type="binding site" evidence="1">
    <location>
        <position position="87"/>
    </location>
    <ligand>
        <name>Zn(2+)</name>
        <dbReference type="ChEBI" id="CHEBI:29105"/>
        <label>1</label>
    </ligand>
</feature>
<feature type="binding site" evidence="1">
    <location>
        <position position="90"/>
    </location>
    <ligand>
        <name>Zn(2+)</name>
        <dbReference type="ChEBI" id="CHEBI:29105"/>
        <label>1</label>
    </ligand>
</feature>
<feature type="binding site" evidence="1">
    <location>
        <position position="462"/>
    </location>
    <ligand>
        <name>Mg(2+)</name>
        <dbReference type="ChEBI" id="CHEBI:18420"/>
    </ligand>
</feature>
<feature type="binding site" evidence="1">
    <location>
        <position position="464"/>
    </location>
    <ligand>
        <name>Mg(2+)</name>
        <dbReference type="ChEBI" id="CHEBI:18420"/>
    </ligand>
</feature>
<feature type="binding site" evidence="1">
    <location>
        <position position="466"/>
    </location>
    <ligand>
        <name>Mg(2+)</name>
        <dbReference type="ChEBI" id="CHEBI:18420"/>
    </ligand>
</feature>
<feature type="binding site" evidence="1">
    <location>
        <position position="816"/>
    </location>
    <ligand>
        <name>Zn(2+)</name>
        <dbReference type="ChEBI" id="CHEBI:29105"/>
        <label>2</label>
    </ligand>
</feature>
<feature type="binding site" evidence="1">
    <location>
        <position position="890"/>
    </location>
    <ligand>
        <name>Zn(2+)</name>
        <dbReference type="ChEBI" id="CHEBI:29105"/>
        <label>2</label>
    </ligand>
</feature>
<feature type="binding site" evidence="1">
    <location>
        <position position="897"/>
    </location>
    <ligand>
        <name>Zn(2+)</name>
        <dbReference type="ChEBI" id="CHEBI:29105"/>
        <label>2</label>
    </ligand>
</feature>
<feature type="binding site" evidence="1">
    <location>
        <position position="900"/>
    </location>
    <ligand>
        <name>Zn(2+)</name>
        <dbReference type="ChEBI" id="CHEBI:29105"/>
        <label>2</label>
    </ligand>
</feature>
<keyword id="KW-0240">DNA-directed RNA polymerase</keyword>
<keyword id="KW-0460">Magnesium</keyword>
<keyword id="KW-0479">Metal-binding</keyword>
<keyword id="KW-0548">Nucleotidyltransferase</keyword>
<keyword id="KW-1185">Reference proteome</keyword>
<keyword id="KW-0804">Transcription</keyword>
<keyword id="KW-0808">Transferase</keyword>
<keyword id="KW-0862">Zinc</keyword>
<accession>A1KB33</accession>
<sequence>MKSLLADLFKQTLPNEEEFDAITIGLASPDKIRSWSYGEVKKPETINYRTFKPERDGLFCAKIFGPVKDYECLCGKYKRLKHRGVICEKCGVEVTLSKVRRERMGHIELASPVAHIWFLKSLPSRLGMVLDMTLRDIERVLYFEAFVVVEPGMTPLNRAQLLTEDDYLAKVEEYGDDFDAVMGAEGIRELLRTLDVNQEIERLRSDLETTGSEAKIKKFSKRLKVLEAFQQSGIKPEWMILEVLPVLPPDLRPLVPLDGGRFATSDLNDLYRRVINRNNRLKRLLELKAPDIIVRNEKRMLQESVDSLLDNGRRGKAMTGANKRPLKSLADMIKGKGGRFRQNLLGKRVDYSGRSVITVGPQLKLHQCGLPKLMALELFKPFIFNKLELMGLATTIKQAKKMVESQEPVVWDILEDVIREHPVMLNRAPTLHRLGIQAFEPVLIEGKAIQLHPLVCVAFNADFDGDQMAVHVPLSLEAQMEARTLMLASNNVLSPANGDPIIVPSQDIVLGLYYATREGVNVPGEGMLFTDVGEVKRAYESGQISLHARVTVRLKEFDRGPEGERIERVVRHNTTAGRAILSEILPAGLPFSVIDKPLKKKEISKLINASFRRCGLRATVIFADQLMQYGYRLATRAGISIAVKDMLVPDLKEDLIRAAEAEVKEIAQQYTSGLVTDGERYNKVVDIWGRCGDQVAKAMMEQLGQEPVVDRNGNTVKQEAFNSIYMMADSGARGSAAQIRQLAGMRGLMAKPDGSIIETPITTNFREGLNVLQYFISTHGARKGLADTALKTANSGYLTRRLVDVTQDLVVIEDDCGTREGFNMKALIEGGEVVEPLRERILGRVCAEDVVNPDTQETAIEAGTLLDEDMVDLIESLGVDEVKVRTPLTCETRYGLCAKCYGRDLGRGAMVNAGEAVGVIAAQSIGEPGTQLTMRTFHVGGAASRAAAASGVEAKSSGTIRFAGNMRYVANAKGEKVVIARSAEVVVADDMGRERERHKLPYGAMLLVDDGAQVKAGAQLASWDPHTRPIVTEYSGTVKFENVEEGVTVAKQIDEVTGLSTLVVIDSKRRSSSGAAKGVRPQVKLLDENGEEVRIAGTDHAVAITFQVGSLITVKDGQQVSVGDILARIPQESAKTRDITGGLPRVAELFEARSPKDAGLLAEYTGTVSFGKDTKGKQRLVITEPDGTVHEFLIPKDKHLMVHDGQVVNKGELIVDGPADPHDILRLQGINELARYIIDEVQDVYRLQGVKINDKHIEVIVRQMLRRVVITDPGDTKFIREEQVERSEVLDENDRIEAEGKLPAQYENVLLGITKASLSTDSFISAASFQETTRVLTEAAIMGKRDELRGLKENVIVGRLIPAGTGLAYHRSRRSQSAGEDLGIEHAWAPIETPAEEQHDISAS</sequence>
<proteinExistence type="inferred from homology"/>
<name>RPOC_AZOSB</name>
<evidence type="ECO:0000255" key="1">
    <source>
        <dbReference type="HAMAP-Rule" id="MF_01322"/>
    </source>
</evidence>